<dbReference type="EC" id="2.4.1.21" evidence="1"/>
<dbReference type="EMBL" id="CP000918">
    <property type="protein sequence ID" value="ACO17357.1"/>
    <property type="molecule type" value="Genomic_DNA"/>
</dbReference>
<dbReference type="RefSeq" id="WP_000697313.1">
    <property type="nucleotide sequence ID" value="NC_012468.1"/>
</dbReference>
<dbReference type="SMR" id="C1C7B7"/>
<dbReference type="CAZy" id="GT5">
    <property type="family name" value="Glycosyltransferase Family 5"/>
</dbReference>
<dbReference type="GeneID" id="45653538"/>
<dbReference type="KEGG" id="snm:SP70585_1194"/>
<dbReference type="HOGENOM" id="CLU_009583_18_2_9"/>
<dbReference type="UniPathway" id="UPA00164"/>
<dbReference type="Proteomes" id="UP000002211">
    <property type="component" value="Chromosome"/>
</dbReference>
<dbReference type="GO" id="GO:0009011">
    <property type="term" value="F:alpha-1,4-glucan glucosyltransferase (ADP-glucose donor) activity"/>
    <property type="evidence" value="ECO:0007669"/>
    <property type="project" value="UniProtKB-UniRule"/>
</dbReference>
<dbReference type="GO" id="GO:0004373">
    <property type="term" value="F:alpha-1,4-glucan glucosyltransferase (UDP-glucose donor) activity"/>
    <property type="evidence" value="ECO:0007669"/>
    <property type="project" value="InterPro"/>
</dbReference>
<dbReference type="GO" id="GO:0005978">
    <property type="term" value="P:glycogen biosynthetic process"/>
    <property type="evidence" value="ECO:0007669"/>
    <property type="project" value="UniProtKB-UniRule"/>
</dbReference>
<dbReference type="CDD" id="cd03791">
    <property type="entry name" value="GT5_Glycogen_synthase_DULL1-like"/>
    <property type="match status" value="1"/>
</dbReference>
<dbReference type="Gene3D" id="3.40.50.2000">
    <property type="entry name" value="Glycogen Phosphorylase B"/>
    <property type="match status" value="2"/>
</dbReference>
<dbReference type="HAMAP" id="MF_00484">
    <property type="entry name" value="Glycogen_synth"/>
    <property type="match status" value="1"/>
</dbReference>
<dbReference type="InterPro" id="IPR001296">
    <property type="entry name" value="Glyco_trans_1"/>
</dbReference>
<dbReference type="InterPro" id="IPR011835">
    <property type="entry name" value="GS/SS"/>
</dbReference>
<dbReference type="InterPro" id="IPR013534">
    <property type="entry name" value="Starch_synth_cat_dom"/>
</dbReference>
<dbReference type="NCBIfam" id="TIGR02095">
    <property type="entry name" value="glgA"/>
    <property type="match status" value="1"/>
</dbReference>
<dbReference type="NCBIfam" id="NF001898">
    <property type="entry name" value="PRK00654.1-1"/>
    <property type="match status" value="1"/>
</dbReference>
<dbReference type="PANTHER" id="PTHR45825:SF11">
    <property type="entry name" value="ALPHA AMYLASE DOMAIN-CONTAINING PROTEIN"/>
    <property type="match status" value="1"/>
</dbReference>
<dbReference type="PANTHER" id="PTHR45825">
    <property type="entry name" value="GRANULE-BOUND STARCH SYNTHASE 1, CHLOROPLASTIC/AMYLOPLASTIC"/>
    <property type="match status" value="1"/>
</dbReference>
<dbReference type="Pfam" id="PF08323">
    <property type="entry name" value="Glyco_transf_5"/>
    <property type="match status" value="1"/>
</dbReference>
<dbReference type="Pfam" id="PF00534">
    <property type="entry name" value="Glycos_transf_1"/>
    <property type="match status" value="1"/>
</dbReference>
<dbReference type="SUPFAM" id="SSF53756">
    <property type="entry name" value="UDP-Glycosyltransferase/glycogen phosphorylase"/>
    <property type="match status" value="1"/>
</dbReference>
<accession>C1C7B7</accession>
<keyword id="KW-0320">Glycogen biosynthesis</keyword>
<keyword id="KW-0328">Glycosyltransferase</keyword>
<keyword id="KW-0808">Transferase</keyword>
<sequence length="477" mass="54132">MKILFVAAEGAPFSKTGGLGDVIGALPKSLVKAGHEVAVILPYYDMVEAKFGSQIEDVLHFEVSVGWRRQYCGIKKTVLNGVTFYFIDNQYYFFRGHVYGDFDDGERFAFFQLAAIEAMERIDFIPDLLHVHDYHTAMIPFLLKEKYRWIQAYEDIETVLTIHNLEFQGQFSEGMLGDLFGVGFERYADGTLRWNNCLNWMKAGILYANRVSTVSPSYAHEIMTSQFGCNLDQILKMESGKVSGIVNGIDADLYNPQTDALLDYHFNQEDLSGKAKNKAKLQERVGLPVRADVPLVGIVSRLTRQKGFDVVVESLHHILQEDVQIVLLGTGDPAFEGAFSWFAQIYPDKLSTNITFDVKLAQEIYAACDLFLMPSRFEPCGLSQMMAMRYGTLPLVHEVGGLRDTVRAFNPIEGSGTGFSFDNLSPYWLNWTFQTALDLYRNHPDIWRNLQKQAMESDFSWDTACKSYLDLYHSLVN</sequence>
<organism>
    <name type="scientific">Streptococcus pneumoniae (strain 70585)</name>
    <dbReference type="NCBI Taxonomy" id="488221"/>
    <lineage>
        <taxon>Bacteria</taxon>
        <taxon>Bacillati</taxon>
        <taxon>Bacillota</taxon>
        <taxon>Bacilli</taxon>
        <taxon>Lactobacillales</taxon>
        <taxon>Streptococcaceae</taxon>
        <taxon>Streptococcus</taxon>
    </lineage>
</organism>
<name>GLGA_STRP7</name>
<reference key="1">
    <citation type="journal article" date="2010" name="Genome Biol.">
        <title>Structure and dynamics of the pan-genome of Streptococcus pneumoniae and closely related species.</title>
        <authorList>
            <person name="Donati C."/>
            <person name="Hiller N.L."/>
            <person name="Tettelin H."/>
            <person name="Muzzi A."/>
            <person name="Croucher N.J."/>
            <person name="Angiuoli S.V."/>
            <person name="Oggioni M."/>
            <person name="Dunning Hotopp J.C."/>
            <person name="Hu F.Z."/>
            <person name="Riley D.R."/>
            <person name="Covacci A."/>
            <person name="Mitchell T.J."/>
            <person name="Bentley S.D."/>
            <person name="Kilian M."/>
            <person name="Ehrlich G.D."/>
            <person name="Rappuoli R."/>
            <person name="Moxon E.R."/>
            <person name="Masignani V."/>
        </authorList>
    </citation>
    <scope>NUCLEOTIDE SEQUENCE [LARGE SCALE GENOMIC DNA]</scope>
    <source>
        <strain>70585</strain>
    </source>
</reference>
<proteinExistence type="inferred from homology"/>
<feature type="chain" id="PRO_1000190084" description="Glycogen synthase">
    <location>
        <begin position="1"/>
        <end position="477"/>
    </location>
</feature>
<feature type="binding site" evidence="1">
    <location>
        <position position="15"/>
    </location>
    <ligand>
        <name>ADP-alpha-D-glucose</name>
        <dbReference type="ChEBI" id="CHEBI:57498"/>
    </ligand>
</feature>
<comment type="function">
    <text evidence="1">Synthesizes alpha-1,4-glucan chains using ADP-glucose.</text>
</comment>
<comment type="catalytic activity">
    <reaction evidence="1">
        <text>[(1-&gt;4)-alpha-D-glucosyl](n) + ADP-alpha-D-glucose = [(1-&gt;4)-alpha-D-glucosyl](n+1) + ADP + H(+)</text>
        <dbReference type="Rhea" id="RHEA:18189"/>
        <dbReference type="Rhea" id="RHEA-COMP:9584"/>
        <dbReference type="Rhea" id="RHEA-COMP:9587"/>
        <dbReference type="ChEBI" id="CHEBI:15378"/>
        <dbReference type="ChEBI" id="CHEBI:15444"/>
        <dbReference type="ChEBI" id="CHEBI:57498"/>
        <dbReference type="ChEBI" id="CHEBI:456216"/>
        <dbReference type="EC" id="2.4.1.21"/>
    </reaction>
</comment>
<comment type="pathway">
    <text evidence="1">Glycan biosynthesis; glycogen biosynthesis.</text>
</comment>
<comment type="similarity">
    <text evidence="1">Belongs to the glycosyltransferase 1 family. Bacterial/plant glycogen synthase subfamily.</text>
</comment>
<protein>
    <recommendedName>
        <fullName evidence="1">Glycogen synthase</fullName>
        <ecNumber evidence="1">2.4.1.21</ecNumber>
    </recommendedName>
    <alternativeName>
        <fullName evidence="1">Starch [bacterial glycogen] synthase</fullName>
    </alternativeName>
</protein>
<gene>
    <name evidence="1" type="primary">glgA</name>
    <name type="ordered locus">SP70585_1194</name>
</gene>
<evidence type="ECO:0000255" key="1">
    <source>
        <dbReference type="HAMAP-Rule" id="MF_00484"/>
    </source>
</evidence>